<gene>
    <name evidence="1" type="primary">mnmG</name>
    <name evidence="1" type="synonym">gidA</name>
    <name type="ordered locus">LSL_0124</name>
</gene>
<reference key="1">
    <citation type="journal article" date="2006" name="Proc. Natl. Acad. Sci. U.S.A.">
        <title>Multireplicon genome architecture of Lactobacillus salivarius.</title>
        <authorList>
            <person name="Claesson M.J."/>
            <person name="Li Y."/>
            <person name="Leahy S."/>
            <person name="Canchaya C."/>
            <person name="van Pijkeren J.P."/>
            <person name="Cerdeno-Tarraga A.M."/>
            <person name="Parkhill J."/>
            <person name="Flynn S."/>
            <person name="O'Sullivan G.C."/>
            <person name="Collins J.K."/>
            <person name="Higgins D."/>
            <person name="Shanahan F."/>
            <person name="Fitzgerald G.F."/>
            <person name="van Sinderen D."/>
            <person name="O'Toole P.W."/>
        </authorList>
    </citation>
    <scope>NUCLEOTIDE SEQUENCE [LARGE SCALE GENOMIC DNA]</scope>
    <source>
        <strain>UCC118</strain>
    </source>
</reference>
<proteinExistence type="inferred from homology"/>
<comment type="function">
    <text evidence="1">NAD-binding protein involved in the addition of a carboxymethylaminomethyl (cmnm) group at the wobble position (U34) of certain tRNAs, forming tRNA-cmnm(5)s(2)U34.</text>
</comment>
<comment type="cofactor">
    <cofactor evidence="1">
        <name>FAD</name>
        <dbReference type="ChEBI" id="CHEBI:57692"/>
    </cofactor>
</comment>
<comment type="subunit">
    <text evidence="1">Homodimer. Heterotetramer of two MnmE and two MnmG subunits.</text>
</comment>
<comment type="subcellular location">
    <subcellularLocation>
        <location evidence="1">Cytoplasm</location>
    </subcellularLocation>
</comment>
<comment type="similarity">
    <text evidence="1">Belongs to the MnmG family.</text>
</comment>
<organism>
    <name type="scientific">Ligilactobacillus salivarius (strain UCC118)</name>
    <name type="common">Lactobacillus salivarius</name>
    <dbReference type="NCBI Taxonomy" id="362948"/>
    <lineage>
        <taxon>Bacteria</taxon>
        <taxon>Bacillati</taxon>
        <taxon>Bacillota</taxon>
        <taxon>Bacilli</taxon>
        <taxon>Lactobacillales</taxon>
        <taxon>Lactobacillaceae</taxon>
        <taxon>Ligilactobacillus</taxon>
    </lineage>
</organism>
<sequence>MEFGKRYKAKDYDVIVVGAGHAGCEAALASARMGNETLLITINLEMVAFMPCNPSIGGPAKGIVVREIDAMGGEMGRNIDKTYVQMRMLNTGKGPAVRALRAQADKRQYSIEMKHTIEQTPHLTLRQGIVDDLIIEDGEVKGVVTNTGACYGAKSVVLTTGTAARGKIIIGELMYSSGPNNTQPALELSKNLAKLGFELKRFKTGTPPRVDGNTIDYDKTEEQPGDVEPNHFSYESKDEDYLKVKDQLSCWLTYTNEYTHKIIQDNLDRAPMFTGVIEGVGPRYCPSIEDKIVRFSDKPRHQLFLEPEGRNTDEYYVQGLSTSLPEEVQQEMVRSIDGLEHAEMMRPGYAIEYDVVSPYQLRPTLETKLIKGLYTAGQTNGTSGYEEAAGQGFIAGVNAGRRAKGLEEITLKRSDAYIGVMIDDLVTKGTNEPYRLLTSRAEYRLILRHDNADLRLTELGHEIGLISDERYAAFEEKKAQIEAEKQRLSKIRIKPNAEVNAFVEAHGDRELKDGVLATEFLRRPYVTYQDLLKFIPAPAEPLDRRVIEQIEIQFKYEGYIKKEYAKVEKLKRMEAKKIPARIDYSRIEGIATEAQQKLAKIQPETLAQAGRISGVNPADLSILAVYIEQGKIARVDD</sequence>
<evidence type="ECO:0000255" key="1">
    <source>
        <dbReference type="HAMAP-Rule" id="MF_00129"/>
    </source>
</evidence>
<dbReference type="EMBL" id="CP000233">
    <property type="protein sequence ID" value="ABD98941.1"/>
    <property type="molecule type" value="Genomic_DNA"/>
</dbReference>
<dbReference type="RefSeq" id="WP_003700792.1">
    <property type="nucleotide sequence ID" value="NC_007929.1"/>
</dbReference>
<dbReference type="RefSeq" id="YP_535024.1">
    <property type="nucleotide sequence ID" value="NC_007929.1"/>
</dbReference>
<dbReference type="SMR" id="Q1WVH6"/>
<dbReference type="STRING" id="362948.LSL_0124"/>
<dbReference type="KEGG" id="lsl:LSL_0124"/>
<dbReference type="PATRIC" id="fig|362948.14.peg.198"/>
<dbReference type="HOGENOM" id="CLU_007831_2_2_9"/>
<dbReference type="OrthoDB" id="9815560at2"/>
<dbReference type="Proteomes" id="UP000006559">
    <property type="component" value="Chromosome"/>
</dbReference>
<dbReference type="GO" id="GO:0005829">
    <property type="term" value="C:cytosol"/>
    <property type="evidence" value="ECO:0007669"/>
    <property type="project" value="TreeGrafter"/>
</dbReference>
<dbReference type="GO" id="GO:0050660">
    <property type="term" value="F:flavin adenine dinucleotide binding"/>
    <property type="evidence" value="ECO:0007669"/>
    <property type="project" value="UniProtKB-UniRule"/>
</dbReference>
<dbReference type="GO" id="GO:0030488">
    <property type="term" value="P:tRNA methylation"/>
    <property type="evidence" value="ECO:0007669"/>
    <property type="project" value="TreeGrafter"/>
</dbReference>
<dbReference type="GO" id="GO:0002098">
    <property type="term" value="P:tRNA wobble uridine modification"/>
    <property type="evidence" value="ECO:0007669"/>
    <property type="project" value="InterPro"/>
</dbReference>
<dbReference type="FunFam" id="1.10.10.1800:FF:000001">
    <property type="entry name" value="tRNA uridine 5-carboxymethylaminomethyl modification enzyme MnmG"/>
    <property type="match status" value="1"/>
</dbReference>
<dbReference type="FunFam" id="1.10.150.570:FF:000001">
    <property type="entry name" value="tRNA uridine 5-carboxymethylaminomethyl modification enzyme MnmG"/>
    <property type="match status" value="1"/>
</dbReference>
<dbReference type="FunFam" id="3.50.50.60:FF:000002">
    <property type="entry name" value="tRNA uridine 5-carboxymethylaminomethyl modification enzyme MnmG"/>
    <property type="match status" value="1"/>
</dbReference>
<dbReference type="FunFam" id="3.50.50.60:FF:000063">
    <property type="entry name" value="tRNA uridine 5-carboxymethylaminomethyl modification enzyme MnmG"/>
    <property type="match status" value="1"/>
</dbReference>
<dbReference type="Gene3D" id="3.50.50.60">
    <property type="entry name" value="FAD/NAD(P)-binding domain"/>
    <property type="match status" value="2"/>
</dbReference>
<dbReference type="Gene3D" id="1.10.150.570">
    <property type="entry name" value="GidA associated domain, C-terminal subdomain"/>
    <property type="match status" value="1"/>
</dbReference>
<dbReference type="Gene3D" id="1.10.10.1800">
    <property type="entry name" value="tRNA uridine 5-carboxymethylaminomethyl modification enzyme MnmG/GidA"/>
    <property type="match status" value="1"/>
</dbReference>
<dbReference type="HAMAP" id="MF_00129">
    <property type="entry name" value="MnmG_GidA"/>
    <property type="match status" value="1"/>
</dbReference>
<dbReference type="InterPro" id="IPR036188">
    <property type="entry name" value="FAD/NAD-bd_sf"/>
</dbReference>
<dbReference type="InterPro" id="IPR049312">
    <property type="entry name" value="GIDA_C_N"/>
</dbReference>
<dbReference type="InterPro" id="IPR004416">
    <property type="entry name" value="MnmG"/>
</dbReference>
<dbReference type="InterPro" id="IPR002218">
    <property type="entry name" value="MnmG-rel"/>
</dbReference>
<dbReference type="InterPro" id="IPR020595">
    <property type="entry name" value="MnmG-rel_CS"/>
</dbReference>
<dbReference type="InterPro" id="IPR026904">
    <property type="entry name" value="MnmG_C"/>
</dbReference>
<dbReference type="InterPro" id="IPR047001">
    <property type="entry name" value="MnmG_C_subdom"/>
</dbReference>
<dbReference type="InterPro" id="IPR044920">
    <property type="entry name" value="MnmG_C_subdom_sf"/>
</dbReference>
<dbReference type="InterPro" id="IPR040131">
    <property type="entry name" value="MnmG_N"/>
</dbReference>
<dbReference type="NCBIfam" id="TIGR00136">
    <property type="entry name" value="mnmG_gidA"/>
    <property type="match status" value="1"/>
</dbReference>
<dbReference type="PANTHER" id="PTHR11806">
    <property type="entry name" value="GLUCOSE INHIBITED DIVISION PROTEIN A"/>
    <property type="match status" value="1"/>
</dbReference>
<dbReference type="PANTHER" id="PTHR11806:SF0">
    <property type="entry name" value="PROTEIN MTO1 HOMOLOG, MITOCHONDRIAL"/>
    <property type="match status" value="1"/>
</dbReference>
<dbReference type="Pfam" id="PF01134">
    <property type="entry name" value="GIDA"/>
    <property type="match status" value="1"/>
</dbReference>
<dbReference type="Pfam" id="PF21680">
    <property type="entry name" value="GIDA_C_1st"/>
    <property type="match status" value="1"/>
</dbReference>
<dbReference type="Pfam" id="PF13932">
    <property type="entry name" value="SAM_GIDA_C"/>
    <property type="match status" value="1"/>
</dbReference>
<dbReference type="PRINTS" id="PR00368">
    <property type="entry name" value="FADPNR"/>
</dbReference>
<dbReference type="PRINTS" id="PR00411">
    <property type="entry name" value="PNDRDTASEI"/>
</dbReference>
<dbReference type="SMART" id="SM01228">
    <property type="entry name" value="GIDA_assoc_3"/>
    <property type="match status" value="1"/>
</dbReference>
<dbReference type="SUPFAM" id="SSF51905">
    <property type="entry name" value="FAD/NAD(P)-binding domain"/>
    <property type="match status" value="1"/>
</dbReference>
<dbReference type="PROSITE" id="PS01280">
    <property type="entry name" value="GIDA_1"/>
    <property type="match status" value="1"/>
</dbReference>
<dbReference type="PROSITE" id="PS01281">
    <property type="entry name" value="GIDA_2"/>
    <property type="match status" value="1"/>
</dbReference>
<keyword id="KW-0963">Cytoplasm</keyword>
<keyword id="KW-0274">FAD</keyword>
<keyword id="KW-0285">Flavoprotein</keyword>
<keyword id="KW-0520">NAD</keyword>
<keyword id="KW-1185">Reference proteome</keyword>
<keyword id="KW-0819">tRNA processing</keyword>
<feature type="chain" id="PRO_1000016616" description="tRNA uridine 5-carboxymethylaminomethyl modification enzyme MnmG">
    <location>
        <begin position="1"/>
        <end position="637"/>
    </location>
</feature>
<feature type="binding site" evidence="1">
    <location>
        <begin position="18"/>
        <end position="23"/>
    </location>
    <ligand>
        <name>FAD</name>
        <dbReference type="ChEBI" id="CHEBI:57692"/>
    </ligand>
</feature>
<feature type="binding site" evidence="1">
    <location>
        <begin position="281"/>
        <end position="295"/>
    </location>
    <ligand>
        <name>NAD(+)</name>
        <dbReference type="ChEBI" id="CHEBI:57540"/>
    </ligand>
</feature>
<name>MNMG_LIGS1</name>
<protein>
    <recommendedName>
        <fullName evidence="1">tRNA uridine 5-carboxymethylaminomethyl modification enzyme MnmG</fullName>
    </recommendedName>
    <alternativeName>
        <fullName evidence="1">Glucose-inhibited division protein A</fullName>
    </alternativeName>
</protein>
<accession>Q1WVH6</accession>